<reference key="1">
    <citation type="journal article" date="2004" name="Nat. Genet.">
        <title>Complete sequencing and characterization of 21,243 full-length human cDNAs.</title>
        <authorList>
            <person name="Ota T."/>
            <person name="Suzuki Y."/>
            <person name="Nishikawa T."/>
            <person name="Otsuki T."/>
            <person name="Sugiyama T."/>
            <person name="Irie R."/>
            <person name="Wakamatsu A."/>
            <person name="Hayashi K."/>
            <person name="Sato H."/>
            <person name="Nagai K."/>
            <person name="Kimura K."/>
            <person name="Makita H."/>
            <person name="Sekine M."/>
            <person name="Obayashi M."/>
            <person name="Nishi T."/>
            <person name="Shibahara T."/>
            <person name="Tanaka T."/>
            <person name="Ishii S."/>
            <person name="Yamamoto J."/>
            <person name="Saito K."/>
            <person name="Kawai Y."/>
            <person name="Isono Y."/>
            <person name="Nakamura Y."/>
            <person name="Nagahari K."/>
            <person name="Murakami K."/>
            <person name="Yasuda T."/>
            <person name="Iwayanagi T."/>
            <person name="Wagatsuma M."/>
            <person name="Shiratori A."/>
            <person name="Sudo H."/>
            <person name="Hosoiri T."/>
            <person name="Kaku Y."/>
            <person name="Kodaira H."/>
            <person name="Kondo H."/>
            <person name="Sugawara M."/>
            <person name="Takahashi M."/>
            <person name="Kanda K."/>
            <person name="Yokoi T."/>
            <person name="Furuya T."/>
            <person name="Kikkawa E."/>
            <person name="Omura Y."/>
            <person name="Abe K."/>
            <person name="Kamihara K."/>
            <person name="Katsuta N."/>
            <person name="Sato K."/>
            <person name="Tanikawa M."/>
            <person name="Yamazaki M."/>
            <person name="Ninomiya K."/>
            <person name="Ishibashi T."/>
            <person name="Yamashita H."/>
            <person name="Murakawa K."/>
            <person name="Fujimori K."/>
            <person name="Tanai H."/>
            <person name="Kimata M."/>
            <person name="Watanabe M."/>
            <person name="Hiraoka S."/>
            <person name="Chiba Y."/>
            <person name="Ishida S."/>
            <person name="Ono Y."/>
            <person name="Takiguchi S."/>
            <person name="Watanabe S."/>
            <person name="Yosida M."/>
            <person name="Hotuta T."/>
            <person name="Kusano J."/>
            <person name="Kanehori K."/>
            <person name="Takahashi-Fujii A."/>
            <person name="Hara H."/>
            <person name="Tanase T.-O."/>
            <person name="Nomura Y."/>
            <person name="Togiya S."/>
            <person name="Komai F."/>
            <person name="Hara R."/>
            <person name="Takeuchi K."/>
            <person name="Arita M."/>
            <person name="Imose N."/>
            <person name="Musashino K."/>
            <person name="Yuuki H."/>
            <person name="Oshima A."/>
            <person name="Sasaki N."/>
            <person name="Aotsuka S."/>
            <person name="Yoshikawa Y."/>
            <person name="Matsunawa H."/>
            <person name="Ichihara T."/>
            <person name="Shiohata N."/>
            <person name="Sano S."/>
            <person name="Moriya S."/>
            <person name="Momiyama H."/>
            <person name="Satoh N."/>
            <person name="Takami S."/>
            <person name="Terashima Y."/>
            <person name="Suzuki O."/>
            <person name="Nakagawa S."/>
            <person name="Senoh A."/>
            <person name="Mizoguchi H."/>
            <person name="Goto Y."/>
            <person name="Shimizu F."/>
            <person name="Wakebe H."/>
            <person name="Hishigaki H."/>
            <person name="Watanabe T."/>
            <person name="Sugiyama A."/>
            <person name="Takemoto M."/>
            <person name="Kawakami B."/>
            <person name="Yamazaki M."/>
            <person name="Watanabe K."/>
            <person name="Kumagai A."/>
            <person name="Itakura S."/>
            <person name="Fukuzumi Y."/>
            <person name="Fujimori Y."/>
            <person name="Komiyama M."/>
            <person name="Tashiro H."/>
            <person name="Tanigami A."/>
            <person name="Fujiwara T."/>
            <person name="Ono T."/>
            <person name="Yamada K."/>
            <person name="Fujii Y."/>
            <person name="Ozaki K."/>
            <person name="Hirao M."/>
            <person name="Ohmori Y."/>
            <person name="Kawabata A."/>
            <person name="Hikiji T."/>
            <person name="Kobatake N."/>
            <person name="Inagaki H."/>
            <person name="Ikema Y."/>
            <person name="Okamoto S."/>
            <person name="Okitani R."/>
            <person name="Kawakami T."/>
            <person name="Noguchi S."/>
            <person name="Itoh T."/>
            <person name="Shigeta K."/>
            <person name="Senba T."/>
            <person name="Matsumura K."/>
            <person name="Nakajima Y."/>
            <person name="Mizuno T."/>
            <person name="Morinaga M."/>
            <person name="Sasaki M."/>
            <person name="Togashi T."/>
            <person name="Oyama M."/>
            <person name="Hata H."/>
            <person name="Watanabe M."/>
            <person name="Komatsu T."/>
            <person name="Mizushima-Sugano J."/>
            <person name="Satoh T."/>
            <person name="Shirai Y."/>
            <person name="Takahashi Y."/>
            <person name="Nakagawa K."/>
            <person name="Okumura K."/>
            <person name="Nagase T."/>
            <person name="Nomura N."/>
            <person name="Kikuchi H."/>
            <person name="Masuho Y."/>
            <person name="Yamashita R."/>
            <person name="Nakai K."/>
            <person name="Yada T."/>
            <person name="Nakamura Y."/>
            <person name="Ohara O."/>
            <person name="Isogai T."/>
            <person name="Sugano S."/>
        </authorList>
    </citation>
    <scope>NUCLEOTIDE SEQUENCE [LARGE SCALE MRNA]</scope>
    <source>
        <tissue>Testis</tissue>
    </source>
</reference>
<reference key="2">
    <citation type="journal article" date="2006" name="Nature">
        <title>DNA sequence and analysis of human chromosome 8.</title>
        <authorList>
            <person name="Nusbaum C."/>
            <person name="Mikkelsen T.S."/>
            <person name="Zody M.C."/>
            <person name="Asakawa S."/>
            <person name="Taudien S."/>
            <person name="Garber M."/>
            <person name="Kodira C.D."/>
            <person name="Schueler M.G."/>
            <person name="Shimizu A."/>
            <person name="Whittaker C.A."/>
            <person name="Chang J.L."/>
            <person name="Cuomo C.A."/>
            <person name="Dewar K."/>
            <person name="FitzGerald M.G."/>
            <person name="Yang X."/>
            <person name="Allen N.R."/>
            <person name="Anderson S."/>
            <person name="Asakawa T."/>
            <person name="Blechschmidt K."/>
            <person name="Bloom T."/>
            <person name="Borowsky M.L."/>
            <person name="Butler J."/>
            <person name="Cook A."/>
            <person name="Corum B."/>
            <person name="DeArellano K."/>
            <person name="DeCaprio D."/>
            <person name="Dooley K.T."/>
            <person name="Dorris L. III"/>
            <person name="Engels R."/>
            <person name="Gloeckner G."/>
            <person name="Hafez N."/>
            <person name="Hagopian D.S."/>
            <person name="Hall J.L."/>
            <person name="Ishikawa S.K."/>
            <person name="Jaffe D.B."/>
            <person name="Kamat A."/>
            <person name="Kudoh J."/>
            <person name="Lehmann R."/>
            <person name="Lokitsang T."/>
            <person name="Macdonald P."/>
            <person name="Major J.E."/>
            <person name="Matthews C.D."/>
            <person name="Mauceli E."/>
            <person name="Menzel U."/>
            <person name="Mihalev A.H."/>
            <person name="Minoshima S."/>
            <person name="Murayama Y."/>
            <person name="Naylor J.W."/>
            <person name="Nicol R."/>
            <person name="Nguyen C."/>
            <person name="O'Leary S.B."/>
            <person name="O'Neill K."/>
            <person name="Parker S.C.J."/>
            <person name="Polley A."/>
            <person name="Raymond C.K."/>
            <person name="Reichwald K."/>
            <person name="Rodriguez J."/>
            <person name="Sasaki T."/>
            <person name="Schilhabel M."/>
            <person name="Siddiqui R."/>
            <person name="Smith C.L."/>
            <person name="Sneddon T.P."/>
            <person name="Talamas J.A."/>
            <person name="Tenzin P."/>
            <person name="Topham K."/>
            <person name="Venkataraman V."/>
            <person name="Wen G."/>
            <person name="Yamazaki S."/>
            <person name="Young S.K."/>
            <person name="Zeng Q."/>
            <person name="Zimmer A.R."/>
            <person name="Rosenthal A."/>
            <person name="Birren B.W."/>
            <person name="Platzer M."/>
            <person name="Shimizu N."/>
            <person name="Lander E.S."/>
        </authorList>
    </citation>
    <scope>NUCLEOTIDE SEQUENCE [LARGE SCALE GENOMIC DNA]</scope>
</reference>
<reference key="3">
    <citation type="journal article" date="2004" name="Genome Res.">
        <title>The status, quality, and expansion of the NIH full-length cDNA project: the Mammalian Gene Collection (MGC).</title>
        <authorList>
            <consortium name="The MGC Project Team"/>
        </authorList>
    </citation>
    <scope>NUCLEOTIDE SEQUENCE [LARGE SCALE MRNA]</scope>
    <source>
        <tissue>Testis</tissue>
    </source>
</reference>
<reference key="4">
    <citation type="journal article" date="2018" name="Gene">
        <title>Long noncoding RNA TMEM75 promotes colorectal cancer progression by activation of SIM2.</title>
        <authorList>
            <person name="Jin X."/>
            <person name="Liu G."/>
            <person name="Zhang X."/>
            <person name="Du N."/>
        </authorList>
    </citation>
    <scope>CAUTION</scope>
</reference>
<evidence type="ECO:0000255" key="1"/>
<evidence type="ECO:0000256" key="2">
    <source>
        <dbReference type="SAM" id="MobiDB-lite"/>
    </source>
</evidence>
<evidence type="ECO:0000269" key="3">
    <source>
    </source>
</evidence>
<evidence type="ECO:0000312" key="4">
    <source>
        <dbReference type="HGNC" id="HGNC:32295"/>
    </source>
</evidence>
<keyword id="KW-0472">Membrane</keyword>
<keyword id="KW-1185">Reference proteome</keyword>
<keyword id="KW-0812">Transmembrane</keyword>
<keyword id="KW-1133">Transmembrane helix</keyword>
<organism>
    <name type="scientific">Homo sapiens</name>
    <name type="common">Human</name>
    <dbReference type="NCBI Taxonomy" id="9606"/>
    <lineage>
        <taxon>Eukaryota</taxon>
        <taxon>Metazoa</taxon>
        <taxon>Chordata</taxon>
        <taxon>Craniata</taxon>
        <taxon>Vertebrata</taxon>
        <taxon>Euteleostomi</taxon>
        <taxon>Mammalia</taxon>
        <taxon>Eutheria</taxon>
        <taxon>Euarchontoglires</taxon>
        <taxon>Primates</taxon>
        <taxon>Haplorrhini</taxon>
        <taxon>Catarrhini</taxon>
        <taxon>Hominidae</taxon>
        <taxon>Homo</taxon>
    </lineage>
</organism>
<dbReference type="EMBL" id="AK093424">
    <property type="status" value="NOT_ANNOTATED_CDS"/>
    <property type="molecule type" value="mRNA"/>
</dbReference>
<dbReference type="EMBL" id="AC103705">
    <property type="status" value="NOT_ANNOTATED_CDS"/>
    <property type="molecule type" value="Genomic_DNA"/>
</dbReference>
<dbReference type="EMBL" id="BC137383">
    <property type="protein sequence ID" value="AAI37384.1"/>
    <property type="molecule type" value="mRNA"/>
</dbReference>
<dbReference type="EMBL" id="BC137385">
    <property type="protein sequence ID" value="AAI37386.1"/>
    <property type="molecule type" value="mRNA"/>
</dbReference>
<dbReference type="IntAct" id="Q8N9X5">
    <property type="interactions" value="8"/>
</dbReference>
<dbReference type="BioMuta" id="HGNC:32295"/>
<dbReference type="DMDM" id="74729788"/>
<dbReference type="jPOST" id="Q8N9X5"/>
<dbReference type="PeptideAtlas" id="Q8N9X5"/>
<dbReference type="ProteomicsDB" id="72607"/>
<dbReference type="AGR" id="HGNC:32295"/>
<dbReference type="GeneCards" id="LINC02912"/>
<dbReference type="HGNC" id="HGNC:32295">
    <property type="gene designation" value="LINC02912"/>
</dbReference>
<dbReference type="neXtProt" id="NX_Q8N9X5"/>
<dbReference type="InParanoid" id="Q8N9X5"/>
<dbReference type="PAN-GO" id="Q8N9X5">
    <property type="GO annotations" value="0 GO annotations based on evolutionary models"/>
</dbReference>
<dbReference type="PhylomeDB" id="Q8N9X5"/>
<dbReference type="Pharos" id="Q8N9X5">
    <property type="development level" value="Tdark"/>
</dbReference>
<dbReference type="PRO" id="PR:Q8N9X5"/>
<dbReference type="Proteomes" id="UP000005640">
    <property type="component" value="Unplaced"/>
</dbReference>
<dbReference type="RNAct" id="Q8N9X5">
    <property type="molecule type" value="protein"/>
</dbReference>
<dbReference type="GO" id="GO:0016020">
    <property type="term" value="C:membrane"/>
    <property type="evidence" value="ECO:0007669"/>
    <property type="project" value="UniProtKB-SubCell"/>
</dbReference>
<sequence length="138" mass="15361">MRPTADSFRLKKGNVFPNFDPCAQALQKSCHFALSFLIGKMGIIILSVCLICTRLLQEGIAQSKCLINVSFSLYSCFIVFVTISQDSETLSLDCDHRLFFSLPFTDPASGGQSQHSWPCPERSKNLPQVSKQLRNRAG</sequence>
<name>TMM75_HUMAN</name>
<accession>Q8N9X5</accession>
<accession>B2RPD6</accession>
<accession>B9EH93</accession>
<comment type="subcellular location">
    <subcellularLocation>
        <location evidence="1">Membrane</location>
        <topology evidence="1">Multi-pass membrane protein</topology>
    </subcellularLocation>
</comment>
<comment type="caution">
    <text evidence="3">Product of a dubious CDS prediction. LINC02912 may produce non-coding RNAs that regulate the expression of SIM2.</text>
</comment>
<feature type="chain" id="PRO_0000271080" description="Putative protein encoded by LINC02912">
    <location>
        <begin position="1"/>
        <end position="138"/>
    </location>
</feature>
<feature type="transmembrane region" description="Helical" evidence="1">
    <location>
        <begin position="32"/>
        <end position="52"/>
    </location>
</feature>
<feature type="transmembrane region" description="Helical" evidence="1">
    <location>
        <begin position="65"/>
        <end position="85"/>
    </location>
</feature>
<feature type="region of interest" description="Disordered" evidence="2">
    <location>
        <begin position="109"/>
        <end position="138"/>
    </location>
</feature>
<protein>
    <recommendedName>
        <fullName>Putative protein encoded by LINC02912</fullName>
    </recommendedName>
</protein>
<gene>
    <name evidence="4" type="primary">LINC02912</name>
    <name type="synonym">TMEM75</name>
</gene>
<proteinExistence type="uncertain"/>